<reference key="1">
    <citation type="journal article" date="1994" name="Curr. Top. Microbiol. Immunol.">
        <title>Primer-directed sequencing of human papillomavirus types.</title>
        <authorList>
            <person name="Delius H."/>
            <person name="Hofmann B."/>
        </authorList>
    </citation>
    <scope>NUCLEOTIDE SEQUENCE [GENOMIC DNA]</scope>
</reference>
<gene>
    <name evidence="1" type="primary">E2</name>
</gene>
<organism>
    <name type="scientific">Human papillomavirus 56</name>
    <dbReference type="NCBI Taxonomy" id="10596"/>
    <lineage>
        <taxon>Viruses</taxon>
        <taxon>Monodnaviria</taxon>
        <taxon>Shotokuvirae</taxon>
        <taxon>Cossaviricota</taxon>
        <taxon>Papovaviricetes</taxon>
        <taxon>Zurhausenvirales</taxon>
        <taxon>Papillomaviridae</taxon>
        <taxon>Firstpapillomavirinae</taxon>
        <taxon>Alphapapillomavirus</taxon>
        <taxon>Alphapapillomavirus 6</taxon>
    </lineage>
</organism>
<name>VE2_HPV56</name>
<protein>
    <recommendedName>
        <fullName evidence="1">Regulatory protein E2</fullName>
    </recommendedName>
</protein>
<dbReference type="EMBL" id="X74483">
    <property type="protein sequence ID" value="CAA52598.1"/>
    <property type="molecule type" value="Genomic_DNA"/>
</dbReference>
<dbReference type="PIR" id="S36581">
    <property type="entry name" value="S36581"/>
</dbReference>
<dbReference type="SMR" id="P36798"/>
<dbReference type="Proteomes" id="UP000007666">
    <property type="component" value="Segment"/>
</dbReference>
<dbReference type="GO" id="GO:0042025">
    <property type="term" value="C:host cell nucleus"/>
    <property type="evidence" value="ECO:0007669"/>
    <property type="project" value="UniProtKB-SubCell"/>
</dbReference>
<dbReference type="GO" id="GO:0003677">
    <property type="term" value="F:DNA binding"/>
    <property type="evidence" value="ECO:0007669"/>
    <property type="project" value="UniProtKB-UniRule"/>
</dbReference>
<dbReference type="GO" id="GO:0003700">
    <property type="term" value="F:DNA-binding transcription factor activity"/>
    <property type="evidence" value="ECO:0007669"/>
    <property type="project" value="UniProtKB-UniRule"/>
</dbReference>
<dbReference type="GO" id="GO:0000166">
    <property type="term" value="F:nucleotide binding"/>
    <property type="evidence" value="ECO:0007669"/>
    <property type="project" value="UniProtKB-UniRule"/>
</dbReference>
<dbReference type="GO" id="GO:0006260">
    <property type="term" value="P:DNA replication"/>
    <property type="evidence" value="ECO:0007669"/>
    <property type="project" value="UniProtKB-KW"/>
</dbReference>
<dbReference type="GO" id="GO:0006351">
    <property type="term" value="P:DNA-templated transcription"/>
    <property type="evidence" value="ECO:0007669"/>
    <property type="project" value="UniProtKB-UniRule"/>
</dbReference>
<dbReference type="GO" id="GO:0006275">
    <property type="term" value="P:regulation of DNA replication"/>
    <property type="evidence" value="ECO:0007669"/>
    <property type="project" value="UniProtKB-UniRule"/>
</dbReference>
<dbReference type="GO" id="GO:0039693">
    <property type="term" value="P:viral DNA genome replication"/>
    <property type="evidence" value="ECO:0007669"/>
    <property type="project" value="UniProtKB-UniRule"/>
</dbReference>
<dbReference type="Gene3D" id="3.30.70.330">
    <property type="match status" value="1"/>
</dbReference>
<dbReference type="Gene3D" id="2.170.200.10">
    <property type="entry name" value="Papillomavirus E2 early protein domain"/>
    <property type="match status" value="1"/>
</dbReference>
<dbReference type="HAMAP" id="MF_04001">
    <property type="entry name" value="PPV_E2"/>
    <property type="match status" value="1"/>
</dbReference>
<dbReference type="InterPro" id="IPR035975">
    <property type="entry name" value="E2/EBNA1_C_sf"/>
</dbReference>
<dbReference type="InterPro" id="IPR012677">
    <property type="entry name" value="Nucleotide-bd_a/b_plait_sf"/>
</dbReference>
<dbReference type="InterPro" id="IPR000427">
    <property type="entry name" value="Papillomavirus_E2_C"/>
</dbReference>
<dbReference type="InterPro" id="IPR001866">
    <property type="entry name" value="PPV_E2_N"/>
</dbReference>
<dbReference type="InterPro" id="IPR033668">
    <property type="entry name" value="Reg_prot_E2"/>
</dbReference>
<dbReference type="InterPro" id="IPR036050">
    <property type="entry name" value="Regulatory_protein_E2_N"/>
</dbReference>
<dbReference type="InterPro" id="IPR042504">
    <property type="entry name" value="Regulatory_protein_E2_N_2"/>
</dbReference>
<dbReference type="Pfam" id="PF00511">
    <property type="entry name" value="PPV_E2_C"/>
    <property type="match status" value="1"/>
</dbReference>
<dbReference type="Pfam" id="PF00508">
    <property type="entry name" value="PPV_E2_N"/>
    <property type="match status" value="1"/>
</dbReference>
<dbReference type="SUPFAM" id="SSF51332">
    <property type="entry name" value="E2 regulatory, transactivation domain"/>
    <property type="match status" value="1"/>
</dbReference>
<dbReference type="SUPFAM" id="SSF54957">
    <property type="entry name" value="Viral DNA-binding domain"/>
    <property type="match status" value="1"/>
</dbReference>
<organismHost>
    <name type="scientific">Homo sapiens</name>
    <name type="common">Human</name>
    <dbReference type="NCBI Taxonomy" id="9606"/>
</organismHost>
<proteinExistence type="inferred from homology"/>
<feature type="chain" id="PRO_0000133234" description="Regulatory protein E2">
    <location>
        <begin position="1"/>
        <end position="310"/>
    </location>
</feature>
<feature type="region of interest" description="Transactivation domain" evidence="1">
    <location>
        <begin position="1"/>
        <end position="143"/>
    </location>
</feature>
<feature type="region of interest" description="Disordered" evidence="2">
    <location>
        <begin position="159"/>
        <end position="239"/>
    </location>
</feature>
<feature type="region of interest" description="DNA-binding domain" evidence="1">
    <location>
        <begin position="234"/>
        <end position="310"/>
    </location>
</feature>
<feature type="compositionally biased region" description="Basic and acidic residues" evidence="2">
    <location>
        <begin position="189"/>
        <end position="202"/>
    </location>
</feature>
<feature type="compositionally biased region" description="Basic and acidic residues" evidence="2">
    <location>
        <begin position="210"/>
        <end position="221"/>
    </location>
</feature>
<feature type="cross-link" description="Glycyl lysine isopeptide (Lys-Gly) (interchain with G-Cter in SUMO)" evidence="1">
    <location>
        <position position="241"/>
    </location>
</feature>
<sequence length="310" mass="36083">MVPCLQVCKAKACSAIEVQIALESLSTTIYNNEEWTLRDTCEELWLTEPKKCFKKEGQHIEVWFDGSKNNCMQYVAWKYIYYNGDCGWQKVCSGVDYRGIYYVHDGHKTYYTDFEQEAKKFGCKNIWEVHMENESIYCPDSVSSTCRYNVSPVETVNEYNTHKTTTTTSTSVGNQDAAVSHRPGKRPRLRESEFDSSRESHAKCVTTHTHISDTDNTDSRSRSINNNNHPGDKTTPVVHLKGEPNRLKCCRYRFQKYKTLFVDVTSTYHWTSTDNKNYSIITIIYKDETQRNSFLSHVKIPVVYRLVWDK</sequence>
<keyword id="KW-0010">Activator</keyword>
<keyword id="KW-0235">DNA replication</keyword>
<keyword id="KW-0238">DNA-binding</keyword>
<keyword id="KW-0244">Early protein</keyword>
<keyword id="KW-1048">Host nucleus</keyword>
<keyword id="KW-1017">Isopeptide bond</keyword>
<keyword id="KW-0597">Phosphoprotein</keyword>
<keyword id="KW-1185">Reference proteome</keyword>
<keyword id="KW-0678">Repressor</keyword>
<keyword id="KW-0804">Transcription</keyword>
<keyword id="KW-0805">Transcription regulation</keyword>
<keyword id="KW-0832">Ubl conjugation</keyword>
<comment type="function">
    <text evidence="1">Plays a role in the initiation of viral DNA replication. A dimer of E2 interacts with a dimer of E1 in order to improve specificity of E1 DNA binding activity. Once the complex recognizes and binds DNA at specific sites, the E2 dimer is removed from DNA. E2 also regulates viral transcription through binding to the E2RE response element (5'-ACCNNNNNNGGT-3') present in multiple copies in the regulatory regions of the viral genome. Activates or represses transcription depending on E2RE's position with regards to proximal promoter elements including the TATA-box. Repression occurs by sterically hindering the assembly of the transcription initiation complex.</text>
</comment>
<comment type="subunit">
    <text evidence="1">Binds DNA as homodimer. Interacts with protein E1; this interaction greatly increases E1 DNA-binding activity. Interacts with protein L1; this interaction enhances E2-dependent replication and transcription activation. Interacts with protein L2; this interaction inhibits E2 transcriptional activity but not DNA replication function E2. Interacts with protein E7; this interaction inhibits E7 oncogenic activity. Interacts with host TAF1; this interaction modulates E2-dependent transcriptional regulation. Interacts with host BRD4; this interaction mediates E2 transcriptional activation function. Additionally, the interaction with host BRD4 on mitotic chromosomes mediates tethering of the viral genome. Interacts with host TOPBP1; this interaction is required for optimal viral DNA replication.</text>
</comment>
<comment type="subcellular location">
    <subcellularLocation>
        <location evidence="1">Host nucleus</location>
    </subcellularLocation>
</comment>
<comment type="PTM">
    <text evidence="1">Phosphorylated.</text>
</comment>
<comment type="PTM">
    <text evidence="1">Sumoylation plays a regulatory role in E2 transcriptional activity.</text>
</comment>
<comment type="similarity">
    <text evidence="1">Belongs to the papillomaviridae E2 protein family.</text>
</comment>
<accession>P36798</accession>
<evidence type="ECO:0000255" key="1">
    <source>
        <dbReference type="HAMAP-Rule" id="MF_04001"/>
    </source>
</evidence>
<evidence type="ECO:0000256" key="2">
    <source>
        <dbReference type="SAM" id="MobiDB-lite"/>
    </source>
</evidence>